<evidence type="ECO:0000250" key="1"/>
<evidence type="ECO:0000305" key="2"/>
<feature type="chain" id="PRO_0000211866" description="UPF0122 protein FN1394">
    <location>
        <begin position="1"/>
        <end position="103"/>
    </location>
</feature>
<sequence length="103" mass="12322">MILDEFVEIANLLEIYSSLLSEKQKEYLEDHFENDLSLSEIAKNNNVSRQAIYDNIKRGVALLYDYEDKLKFYQMKKNIRKELVDLKEDFTKENLEKIIENLL</sequence>
<name>Y1394_FUSNN</name>
<keyword id="KW-1185">Reference proteome</keyword>
<organism>
    <name type="scientific">Fusobacterium nucleatum subsp. nucleatum (strain ATCC 25586 / DSM 15643 / BCRC 10681 / CIP 101130 / JCM 8532 / KCTC 2640 / LMG 13131 / VPI 4355)</name>
    <dbReference type="NCBI Taxonomy" id="190304"/>
    <lineage>
        <taxon>Bacteria</taxon>
        <taxon>Fusobacteriati</taxon>
        <taxon>Fusobacteriota</taxon>
        <taxon>Fusobacteriia</taxon>
        <taxon>Fusobacteriales</taxon>
        <taxon>Fusobacteriaceae</taxon>
        <taxon>Fusobacterium</taxon>
    </lineage>
</organism>
<accession>Q8RDV6</accession>
<gene>
    <name type="ordered locus">FN1394</name>
</gene>
<protein>
    <recommendedName>
        <fullName>UPF0122 protein FN1394</fullName>
    </recommendedName>
</protein>
<reference key="1">
    <citation type="journal article" date="2002" name="J. Bacteriol.">
        <title>Genome sequence and analysis of the oral bacterium Fusobacterium nucleatum strain ATCC 25586.</title>
        <authorList>
            <person name="Kapatral V."/>
            <person name="Anderson I."/>
            <person name="Ivanova N."/>
            <person name="Reznik G."/>
            <person name="Los T."/>
            <person name="Lykidis A."/>
            <person name="Bhattacharyya A."/>
            <person name="Bartman A."/>
            <person name="Gardner W."/>
            <person name="Grechkin G."/>
            <person name="Zhu L."/>
            <person name="Vasieva O."/>
            <person name="Chu L."/>
            <person name="Kogan Y."/>
            <person name="Chaga O."/>
            <person name="Goltsman E."/>
            <person name="Bernal A."/>
            <person name="Larsen N."/>
            <person name="D'Souza M."/>
            <person name="Walunas T."/>
            <person name="Pusch G."/>
            <person name="Haselkorn R."/>
            <person name="Fonstein M."/>
            <person name="Kyrpides N.C."/>
            <person name="Overbeek R."/>
        </authorList>
    </citation>
    <scope>NUCLEOTIDE SEQUENCE [LARGE SCALE GENOMIC DNA]</scope>
    <source>
        <strain>ATCC 25586 / DSM 15643 / BCRC 10681 / CIP 101130 / JCM 8532 / KCTC 2640 / LMG 13131 / VPI 4355</strain>
    </source>
</reference>
<proteinExistence type="inferred from homology"/>
<dbReference type="EMBL" id="AE009951">
    <property type="protein sequence ID" value="AAL95587.1"/>
    <property type="molecule type" value="Genomic_DNA"/>
</dbReference>
<dbReference type="RefSeq" id="NP_604288.1">
    <property type="nucleotide sequence ID" value="NC_003454.1"/>
</dbReference>
<dbReference type="SMR" id="Q8RDV6"/>
<dbReference type="FunCoup" id="Q8RDV6">
    <property type="interactions" value="26"/>
</dbReference>
<dbReference type="STRING" id="190304.FN1394"/>
<dbReference type="PaxDb" id="190304-FN1394"/>
<dbReference type="EnsemblBacteria" id="AAL95587">
    <property type="protein sequence ID" value="AAL95587"/>
    <property type="gene ID" value="FN1394"/>
</dbReference>
<dbReference type="KEGG" id="fnu:FN1394"/>
<dbReference type="PATRIC" id="fig|190304.8.peg.1956"/>
<dbReference type="eggNOG" id="COG2739">
    <property type="taxonomic scope" value="Bacteria"/>
</dbReference>
<dbReference type="HOGENOM" id="CLU_129218_1_1_0"/>
<dbReference type="InParanoid" id="Q8RDV6"/>
<dbReference type="BioCyc" id="FNUC190304:G1FZS-1966-MONOMER"/>
<dbReference type="Proteomes" id="UP000002521">
    <property type="component" value="Chromosome"/>
</dbReference>
<dbReference type="Gene3D" id="1.10.10.10">
    <property type="entry name" value="Winged helix-like DNA-binding domain superfamily/Winged helix DNA-binding domain"/>
    <property type="match status" value="1"/>
</dbReference>
<dbReference type="HAMAP" id="MF_00245">
    <property type="entry name" value="UPF0122"/>
    <property type="match status" value="1"/>
</dbReference>
<dbReference type="InterPro" id="IPR013324">
    <property type="entry name" value="RNA_pol_sigma_r3/r4-like"/>
</dbReference>
<dbReference type="InterPro" id="IPR007394">
    <property type="entry name" value="UPF0122"/>
</dbReference>
<dbReference type="InterPro" id="IPR054831">
    <property type="entry name" value="UPF0122_fam_protein"/>
</dbReference>
<dbReference type="InterPro" id="IPR036388">
    <property type="entry name" value="WH-like_DNA-bd_sf"/>
</dbReference>
<dbReference type="NCBIfam" id="NF045758">
    <property type="entry name" value="YlxM"/>
    <property type="match status" value="1"/>
</dbReference>
<dbReference type="PANTHER" id="PTHR40083">
    <property type="entry name" value="UPF0122 PROTEIN CBO2450/CLC_2298"/>
    <property type="match status" value="1"/>
</dbReference>
<dbReference type="PANTHER" id="PTHR40083:SF1">
    <property type="entry name" value="UPF0122 PROTEIN YLXM"/>
    <property type="match status" value="1"/>
</dbReference>
<dbReference type="Pfam" id="PF04297">
    <property type="entry name" value="UPF0122"/>
    <property type="match status" value="1"/>
</dbReference>
<dbReference type="SUPFAM" id="SSF88659">
    <property type="entry name" value="Sigma3 and sigma4 domains of RNA polymerase sigma factors"/>
    <property type="match status" value="1"/>
</dbReference>
<comment type="function">
    <text evidence="1">Might take part in the signal recognition particle (SRP) pathway. This is inferred from the conservation of its genetic proximity to ftsY/ffh. May be a regulatory protein (By similarity).</text>
</comment>
<comment type="similarity">
    <text evidence="2">Belongs to the UPF0122 family.</text>
</comment>